<name>CORIN_MOUSE</name>
<organism>
    <name type="scientific">Mus musculus</name>
    <name type="common">Mouse</name>
    <dbReference type="NCBI Taxonomy" id="10090"/>
    <lineage>
        <taxon>Eukaryota</taxon>
        <taxon>Metazoa</taxon>
        <taxon>Chordata</taxon>
        <taxon>Craniata</taxon>
        <taxon>Vertebrata</taxon>
        <taxon>Euteleostomi</taxon>
        <taxon>Mammalia</taxon>
        <taxon>Eutheria</taxon>
        <taxon>Euarchontoglires</taxon>
        <taxon>Glires</taxon>
        <taxon>Rodentia</taxon>
        <taxon>Myomorpha</taxon>
        <taxon>Muroidea</taxon>
        <taxon>Muridae</taxon>
        <taxon>Murinae</taxon>
        <taxon>Mus</taxon>
        <taxon>Mus</taxon>
    </lineage>
</organism>
<gene>
    <name type="primary">Corin</name>
    <name type="synonym">Crn</name>
    <name type="synonym">Lrp4</name>
</gene>
<comment type="function">
    <text evidence="2 9 10 11 12 13">Serine-type endopeptidase involved in atrial natriuretic peptide (NPPA) processing (PubMed:11884416, PubMed:15637153). Converts through proteolytic cleavage the non-functional propeptide NPPA into the active hormone, thereby regulating blood pressure in heart and promoting natriuresis, diuresis and vasodilation (PubMed:11884416, PubMed:15637153, PubMed:22418978). Proteolytic cleavage of pro-NPPA also plays a role in female pregnancy by promoting trophoblast invasion and spiral artery remodeling in uterus (PubMed:22437503). Also acts as a regulator of sodium reabsorption in kidney (PubMed:20613715, PubMed:22418978). May also process pro-NPPB the B-type natriuretic peptide (By similarity).</text>
</comment>
<comment type="subcellular location">
    <subcellularLocation>
        <location evidence="1">Cell membrane</location>
        <topology evidence="1">Single-pass type II membrane protein</topology>
    </subcellularLocation>
</comment>
<comment type="subcellular location">
    <molecule>Atrial natriuretic peptide-converting enzyme, 180 kDa soluble fragment</molecule>
    <subcellularLocation>
        <location evidence="1">Secreted</location>
    </subcellularLocation>
    <text evidence="1">Soluble form produced following cleavage by ADAM10.</text>
</comment>
<comment type="alternative products">
    <event type="alternative splicing"/>
    <isoform>
        <id>Q9Z319-1</id>
        <name>1</name>
        <name>E1a</name>
        <name>mE1a</name>
        <sequence type="displayed"/>
    </isoform>
    <isoform>
        <id>Q9Z319-2</id>
        <name>2</name>
        <name>E1</name>
        <name>mE1</name>
        <sequence type="described" ref="VSP_043953"/>
    </isoform>
</comment>
<comment type="tissue specificity">
    <text evidence="13">Highly expressed in heart. Also expressed in pregnant uterus.</text>
</comment>
<comment type="PTM">
    <text evidence="1">N-glycosylated; required for processing and activation.</text>
</comment>
<comment type="PTM">
    <text evidence="1">Activated through proteolytic processing by a trypsin-like protease; cleaved into a N-terminal propeptide and an activated corin protease fragment. Atrial natriuretic peptide-converting enzyme, 180 kDa soluble fragment is produced by cleavage by ADAM10. Cleavage by ADAM10 to produce soluble 180 kDa soluble fragment takes place after the transmembrane region and before FZ 1 (By similarity).</text>
</comment>
<comment type="PTM">
    <text evidence="1">A disulfide bond links the activated corin protease fragment and the N-terminal propeptide. The disulfide bond also links the activated corin protease fragment with Atrial natriuretic peptide-converting enzyme, 180 kDa soluble fragment (By similarity).</text>
</comment>
<comment type="disruption phenotype">
    <text evidence="10 12 13">Mice develop normally, are viable and fertile but develop hypertension. They display increased body weight associated with impaired maturation of pro-NPPA which can be restored by injection of Corin. Spontaneous and salt-sensitive hypertension exacerbated during pregnancy is also noticed. A cardiac hypertrophy is also detected together with a decline in cardiac function later in life (PubMed:15637153). Blood pressure on a high-salt diet is significantly increased: knockout mice show an impairment of urinary sodium excretion and an increase in body weight, but no elevation of plasma renin or serum aldosterone levels (PubMed:22418978). Conditional knockout mice which express Corin in heart only do not display any visible phenotype in non-pregnant mice. In contrast, pregnant conditional knockout mice develop high blood pressure and proteinuria, characteristics of pre-eclampsia. In these mice, trophoblast invasion and uterine spiral artery remodeling are markedly impaired (PubMed:22437503).</text>
</comment>
<comment type="miscellaneous">
    <text evidence="16">Corin is disrupted in C57BL/6-Kit(W-sh/W-sh) mice, a genetic inversion used as mast cell-deficient model. Phenotypes in C57BL/6-Kit(W-sh/W-sh) mice are mainly due to the absence of Kit, a receptor for mast cell development. The absence of Corin probably leads to immediate significant cardiac hypertrophy and contractile dysfunction in response to pressure overload (PubMed:21903139).</text>
</comment>
<comment type="similarity">
    <text evidence="7">Belongs to the peptidase S1 family.</text>
</comment>
<evidence type="ECO:0000250" key="1"/>
<evidence type="ECO:0000250" key="2">
    <source>
        <dbReference type="UniProtKB" id="Q9Y5Q5"/>
    </source>
</evidence>
<evidence type="ECO:0000255" key="3"/>
<evidence type="ECO:0000255" key="4">
    <source>
        <dbReference type="PROSITE-ProRule" id="PRU00090"/>
    </source>
</evidence>
<evidence type="ECO:0000255" key="5">
    <source>
        <dbReference type="PROSITE-ProRule" id="PRU00124"/>
    </source>
</evidence>
<evidence type="ECO:0000255" key="6">
    <source>
        <dbReference type="PROSITE-ProRule" id="PRU00196"/>
    </source>
</evidence>
<evidence type="ECO:0000255" key="7">
    <source>
        <dbReference type="PROSITE-ProRule" id="PRU00274"/>
    </source>
</evidence>
<evidence type="ECO:0000256" key="8">
    <source>
        <dbReference type="SAM" id="MobiDB-lite"/>
    </source>
</evidence>
<evidence type="ECO:0000269" key="9">
    <source>
    </source>
</evidence>
<evidence type="ECO:0000269" key="10">
    <source>
    </source>
</evidence>
<evidence type="ECO:0000269" key="11">
    <source>
    </source>
</evidence>
<evidence type="ECO:0000269" key="12">
    <source>
    </source>
</evidence>
<evidence type="ECO:0000269" key="13">
    <source>
    </source>
</evidence>
<evidence type="ECO:0000303" key="14">
    <source>
    </source>
</evidence>
<evidence type="ECO:0000305" key="15"/>
<evidence type="ECO:0000305" key="16">
    <source>
    </source>
</evidence>
<keyword id="KW-0025">Alternative splicing</keyword>
<keyword id="KW-1003">Cell membrane</keyword>
<keyword id="KW-1015">Disulfide bond</keyword>
<keyword id="KW-0325">Glycoprotein</keyword>
<keyword id="KW-0378">Hydrolase</keyword>
<keyword id="KW-0472">Membrane</keyword>
<keyword id="KW-0645">Protease</keyword>
<keyword id="KW-1185">Reference proteome</keyword>
<keyword id="KW-0677">Repeat</keyword>
<keyword id="KW-0964">Secreted</keyword>
<keyword id="KW-0720">Serine protease</keyword>
<keyword id="KW-0735">Signal-anchor</keyword>
<keyword id="KW-0812">Transmembrane</keyword>
<keyword id="KW-1133">Transmembrane helix</keyword>
<keyword id="KW-0865">Zymogen</keyword>
<reference key="1">
    <citation type="journal article" date="1998" name="J. Biochem.">
        <title>A novel low-density lipoprotein receptor-related protein with type II membrane protein-like structure is abundant in heart.</title>
        <authorList>
            <person name="Tomita Y."/>
            <person name="Kim D.-H."/>
            <person name="Magoori K."/>
            <person name="Fujino T."/>
            <person name="Yamamoto T.T."/>
        </authorList>
    </citation>
    <scope>NUCLEOTIDE SEQUENCE [MRNA] (ISOFORM 1)</scope>
</reference>
<reference key="2">
    <citation type="journal article" date="2009" name="PLoS Biol.">
        <title>Lineage-specific biology revealed by a finished genome assembly of the mouse.</title>
        <authorList>
            <person name="Church D.M."/>
            <person name="Goodstadt L."/>
            <person name="Hillier L.W."/>
            <person name="Zody M.C."/>
            <person name="Goldstein S."/>
            <person name="She X."/>
            <person name="Bult C.J."/>
            <person name="Agarwala R."/>
            <person name="Cherry J.L."/>
            <person name="DiCuccio M."/>
            <person name="Hlavina W."/>
            <person name="Kapustin Y."/>
            <person name="Meric P."/>
            <person name="Maglott D."/>
            <person name="Birtle Z."/>
            <person name="Marques A.C."/>
            <person name="Graves T."/>
            <person name="Zhou S."/>
            <person name="Teague B."/>
            <person name="Potamousis K."/>
            <person name="Churas C."/>
            <person name="Place M."/>
            <person name="Herschleb J."/>
            <person name="Runnheim R."/>
            <person name="Forrest D."/>
            <person name="Amos-Landgraf J."/>
            <person name="Schwartz D.C."/>
            <person name="Cheng Z."/>
            <person name="Lindblad-Toh K."/>
            <person name="Eichler E.E."/>
            <person name="Ponting C.P."/>
        </authorList>
    </citation>
    <scope>NUCLEOTIDE SEQUENCE [LARGE SCALE GENOMIC DNA]</scope>
    <source>
        <strain>C57BL/6J</strain>
    </source>
</reference>
<reference key="3">
    <citation type="submission" date="2005-07" db="EMBL/GenBank/DDBJ databases">
        <authorList>
            <person name="Mural R.J."/>
            <person name="Adams M.D."/>
            <person name="Myers E.W."/>
            <person name="Smith H.O."/>
            <person name="Venter J.C."/>
        </authorList>
    </citation>
    <scope>NUCLEOTIDE SEQUENCE [LARGE SCALE GENOMIC DNA]</scope>
</reference>
<reference key="4">
    <citation type="journal article" date="2004" name="Genome Res.">
        <title>The status, quality, and expansion of the NIH full-length cDNA project: the Mammalian Gene Collection (MGC).</title>
        <authorList>
            <consortium name="The MGC Project Team"/>
        </authorList>
    </citation>
    <scope>NUCLEOTIDE SEQUENCE [LARGE SCALE MRNA] (ISOFORMS 1 AND 2)</scope>
    <source>
        <strain>C57BL/6J</strain>
        <tissue>Brain</tissue>
        <tissue>Head</tissue>
    </source>
</reference>
<reference key="5">
    <citation type="journal article" date="2002" name="J. Biol. Chem.">
        <title>Processing of pro-atrial natriuretic peptide by corin in cardiac myocytes.</title>
        <authorList>
            <person name="Wu F."/>
            <person name="Yan W."/>
            <person name="Pan J."/>
            <person name="Morser J."/>
            <person name="Wu Q."/>
        </authorList>
    </citation>
    <scope>FUNCTION</scope>
</reference>
<reference key="6">
    <citation type="journal article" date="2005" name="Proc. Natl. Acad. Sci. U.S.A.">
        <title>Hypertension in mice lacking the proatrial natriuretic peptide convertase corin.</title>
        <authorList>
            <person name="Chan J.C."/>
            <person name="Knudson O."/>
            <person name="Wu F."/>
            <person name="Morser J."/>
            <person name="Dole W.P."/>
            <person name="Wu Q."/>
        </authorList>
    </citation>
    <scope>FUNCTION</scope>
    <scope>DISRUPTION PHENOTYPE</scope>
</reference>
<reference key="7">
    <citation type="journal article" date="2010" name="Kidney Int.">
        <title>Decreased renal corin expression contributes to sodium retention in proteinuric kidney diseases.</title>
        <authorList>
            <person name="Polzin D."/>
            <person name="Kaminski H.J."/>
            <person name="Kastner C."/>
            <person name="Wang W."/>
            <person name="Kramer S."/>
            <person name="Gambaryan S."/>
            <person name="Russwurm M."/>
            <person name="Peters H."/>
            <person name="Wu Q."/>
            <person name="Vandewalle A."/>
            <person name="Bachmann S."/>
            <person name="Theilig F."/>
        </authorList>
    </citation>
    <scope>FUNCTION</scope>
</reference>
<reference key="8">
    <citation type="journal article" date="2011" name="J. Biol. Chem.">
        <title>Human corin isoforms with different cytoplasmic tails that alter cell surface targeting.</title>
        <authorList>
            <person name="Qi X."/>
            <person name="Jiang J."/>
            <person name="Zhu M."/>
            <person name="Wu Q."/>
        </authorList>
    </citation>
    <scope>ALTERNATIVE SPLICING (ISOFORMS 1 AND 2)</scope>
</reference>
<reference key="9">
    <citation type="journal article" date="2011" name="Regul. Pept.">
        <title>Corin-deficient W-sh mice poorly tolerate increased cardiac afterload.</title>
        <authorList>
            <person name="Buckley C.L."/>
            <person name="Stokes A.J."/>
        </authorList>
    </citation>
    <scope>DISRUPTION IN W-SH MODEL MICE</scope>
</reference>
<reference key="10">
    <citation type="journal article" date="2012" name="Kidney Int.">
        <title>Impaired sodium excretion and salt-sensitive hypertension in corin-deficient mice.</title>
        <authorList>
            <person name="Wang W."/>
            <person name="Shen J."/>
            <person name="Cui Y."/>
            <person name="Jiang J."/>
            <person name="Chen S."/>
            <person name="Peng J."/>
            <person name="Wu Q."/>
        </authorList>
    </citation>
    <scope>FUNCTION</scope>
    <scope>DISRUPTION PHENOTYPE</scope>
</reference>
<reference key="11">
    <citation type="journal article" date="2012" name="Nature">
        <title>Role of corin in trophoblast invasion and uterine spiral artery remodelling in pregnancy.</title>
        <authorList>
            <person name="Cui Y."/>
            <person name="Wang W."/>
            <person name="Dong N."/>
            <person name="Lou J."/>
            <person name="Srinivasan D.K."/>
            <person name="Cheng W."/>
            <person name="Huang X."/>
            <person name="Liu M."/>
            <person name="Fang C."/>
            <person name="Peng J."/>
            <person name="Chen S."/>
            <person name="Wu S."/>
            <person name="Liu Z."/>
            <person name="Dong L."/>
            <person name="Zhou Y."/>
            <person name="Wu Q."/>
        </authorList>
    </citation>
    <scope>FUNCTION</scope>
    <scope>TISSUE SPECIFICITY</scope>
    <scope>DISRUPTION PHENOTYPE</scope>
</reference>
<proteinExistence type="evidence at transcript level"/>
<feature type="chain" id="PRO_0000088674" description="Atrial natriuretic peptide-converting enzyme">
    <location>
        <begin position="1"/>
        <end position="1113"/>
    </location>
</feature>
<feature type="chain" id="PRO_0000391767" description="Atrial natriuretic peptide-converting enzyme, N-terminal propeptide" evidence="1">
    <location>
        <begin position="1"/>
        <end position="867"/>
    </location>
</feature>
<feature type="chain" id="PRO_0000417987" description="Atrial natriuretic peptide-converting enzyme, 180 kDa soluble fragment" evidence="1">
    <location>
        <begin status="unknown"/>
        <end position="867"/>
    </location>
</feature>
<feature type="chain" id="PRO_0000391768" description="Atrial natriuretic peptide-converting enzyme, activated protease fragment" evidence="1">
    <location>
        <begin position="868"/>
        <end position="1113"/>
    </location>
</feature>
<feature type="topological domain" description="Cytoplasmic" evidence="3">
    <location>
        <begin position="1"/>
        <end position="112"/>
    </location>
</feature>
<feature type="transmembrane region" description="Helical; Signal-anchor for type II membrane protein" evidence="3">
    <location>
        <begin position="113"/>
        <end position="133"/>
    </location>
</feature>
<feature type="topological domain" description="Extracellular" evidence="3">
    <location>
        <begin position="134"/>
        <end position="1113"/>
    </location>
</feature>
<feature type="domain" description="FZ 1" evidence="4">
    <location>
        <begin position="201"/>
        <end position="327"/>
    </location>
</feature>
<feature type="domain" description="LDL-receptor class A 1" evidence="5">
    <location>
        <begin position="336"/>
        <end position="372"/>
    </location>
</feature>
<feature type="domain" description="LDL-receptor class A 2" evidence="5">
    <location>
        <begin position="373"/>
        <end position="408"/>
    </location>
</feature>
<feature type="domain" description="LDL-receptor class A 3" evidence="5">
    <location>
        <begin position="409"/>
        <end position="445"/>
    </location>
</feature>
<feature type="domain" description="LDL-receptor class A 4" evidence="5">
    <location>
        <begin position="446"/>
        <end position="483"/>
    </location>
</feature>
<feature type="domain" description="FZ 2" evidence="4">
    <location>
        <begin position="518"/>
        <end position="641"/>
    </location>
</feature>
<feature type="domain" description="LDL-receptor class A 5" evidence="5">
    <location>
        <begin position="647"/>
        <end position="682"/>
    </location>
</feature>
<feature type="domain" description="LDL-receptor class A 6" evidence="5">
    <location>
        <begin position="683"/>
        <end position="721"/>
    </location>
</feature>
<feature type="domain" description="LDL-receptor class A 7" evidence="5">
    <location>
        <begin position="722"/>
        <end position="757"/>
    </location>
</feature>
<feature type="domain" description="SRCR" evidence="6">
    <location>
        <begin position="758"/>
        <end position="853"/>
    </location>
</feature>
<feature type="domain" description="Peptidase S1" evidence="7">
    <location>
        <begin position="869"/>
        <end position="1102"/>
    </location>
</feature>
<feature type="region of interest" description="Disordered" evidence="8">
    <location>
        <begin position="176"/>
        <end position="202"/>
    </location>
</feature>
<feature type="active site" description="Charge relay system" evidence="1">
    <location>
        <position position="910"/>
    </location>
</feature>
<feature type="active site" description="Charge relay system" evidence="1">
    <location>
        <position position="959"/>
    </location>
</feature>
<feature type="active site" description="Charge relay system" evidence="1">
    <location>
        <position position="1052"/>
    </location>
</feature>
<feature type="site" description="Cleavage" evidence="1">
    <location>
        <begin position="868"/>
        <end position="869"/>
    </location>
</feature>
<feature type="glycosylation site" description="N-linked (GlcNAc...) asparagine" evidence="3">
    <location>
        <position position="147"/>
    </location>
</feature>
<feature type="glycosylation site" description="N-linked (GlcNAc...) asparagine" evidence="3">
    <location>
        <position position="202"/>
    </location>
</feature>
<feature type="glycosylation site" description="N-linked (GlcNAc...) asparagine" evidence="3">
    <location>
        <position position="208"/>
    </location>
</feature>
<feature type="glycosylation site" description="N-linked (GlcNAc...) asparagine" evidence="3">
    <location>
        <position position="298"/>
    </location>
</feature>
<feature type="glycosylation site" description="N-linked (GlcNAc...) asparagine" evidence="3">
    <location>
        <position position="317"/>
    </location>
</feature>
<feature type="glycosylation site" description="N-linked (GlcNAc...) asparagine" evidence="3">
    <location>
        <position position="373"/>
    </location>
</feature>
<feature type="glycosylation site" description="N-linked (GlcNAc...) asparagine" evidence="3">
    <location>
        <position position="411"/>
    </location>
</feature>
<feature type="glycosylation site" description="N-linked (GlcNAc...) asparagine" evidence="3">
    <location>
        <position position="444"/>
    </location>
</feature>
<feature type="glycosylation site" description="N-linked (GlcNAc...) asparagine" evidence="3">
    <location>
        <position position="481"/>
    </location>
</feature>
<feature type="glycosylation site" description="N-linked (GlcNAc...) asparagine" evidence="3">
    <location>
        <position position="519"/>
    </location>
</feature>
<feature type="glycosylation site" description="N-linked (GlcNAc...) asparagine" evidence="3">
    <location>
        <position position="537"/>
    </location>
</feature>
<feature type="glycosylation site" description="N-linked (GlcNAc...) asparagine" evidence="3">
    <location>
        <position position="635"/>
    </location>
</feature>
<feature type="glycosylation site" description="N-linked (GlcNAc...) asparagine" evidence="3">
    <location>
        <position position="719"/>
    </location>
</feature>
<feature type="glycosylation site" description="N-linked (GlcNAc...) asparagine" evidence="3">
    <location>
        <position position="765"/>
    </location>
</feature>
<feature type="glycosylation site" description="N-linked (GlcNAc...) asparagine" evidence="3">
    <location>
        <position position="828"/>
    </location>
</feature>
<feature type="glycosylation site" description="N-linked (GlcNAc...) asparagine" evidence="3">
    <location>
        <position position="970"/>
    </location>
</feature>
<feature type="glycosylation site" description="N-linked (GlcNAc...) asparagine" evidence="3">
    <location>
        <position position="1089"/>
    </location>
</feature>
<feature type="disulfide bond" evidence="1">
    <location>
        <begin position="206"/>
        <end position="266"/>
    </location>
</feature>
<feature type="disulfide bond" evidence="1">
    <location>
        <begin position="214"/>
        <end position="259"/>
    </location>
</feature>
<feature type="disulfide bond" evidence="1">
    <location>
        <begin position="250"/>
        <end position="290"/>
    </location>
</feature>
<feature type="disulfide bond" evidence="1">
    <location>
        <begin position="279"/>
        <end position="324"/>
    </location>
</feature>
<feature type="disulfide bond" evidence="1">
    <location>
        <begin position="283"/>
        <end position="307"/>
    </location>
</feature>
<feature type="disulfide bond" evidence="1">
    <location>
        <begin position="337"/>
        <end position="350"/>
    </location>
</feature>
<feature type="disulfide bond" evidence="1">
    <location>
        <begin position="345"/>
        <end position="363"/>
    </location>
</feature>
<feature type="disulfide bond" evidence="1">
    <location>
        <begin position="357"/>
        <end position="372"/>
    </location>
</feature>
<feature type="disulfide bond" evidence="1">
    <location>
        <begin position="374"/>
        <end position="386"/>
    </location>
</feature>
<feature type="disulfide bond" evidence="1">
    <location>
        <begin position="381"/>
        <end position="399"/>
    </location>
</feature>
<feature type="disulfide bond" evidence="1">
    <location>
        <begin position="393"/>
        <end position="408"/>
    </location>
</feature>
<feature type="disulfide bond" evidence="1">
    <location>
        <begin position="410"/>
        <end position="423"/>
    </location>
</feature>
<feature type="disulfide bond" evidence="1">
    <location>
        <begin position="418"/>
        <end position="436"/>
    </location>
</feature>
<feature type="disulfide bond" evidence="1">
    <location>
        <begin position="430"/>
        <end position="445"/>
    </location>
</feature>
<feature type="disulfide bond" evidence="1">
    <location>
        <begin position="447"/>
        <end position="460"/>
    </location>
</feature>
<feature type="disulfide bond" evidence="1">
    <location>
        <begin position="455"/>
        <end position="473"/>
    </location>
</feature>
<feature type="disulfide bond" evidence="1">
    <location>
        <begin position="467"/>
        <end position="482"/>
    </location>
</feature>
<feature type="disulfide bond" evidence="1">
    <location>
        <begin position="523"/>
        <end position="586"/>
    </location>
</feature>
<feature type="disulfide bond" evidence="1">
    <location>
        <begin position="531"/>
        <end position="579"/>
    </location>
</feature>
<feature type="disulfide bond" evidence="1">
    <location>
        <begin position="570"/>
        <end position="608"/>
    </location>
</feature>
<feature type="disulfide bond" evidence="1">
    <location>
        <begin position="597"/>
        <end position="638"/>
    </location>
</feature>
<feature type="disulfide bond" evidence="1">
    <location>
        <begin position="601"/>
        <end position="625"/>
    </location>
</feature>
<feature type="disulfide bond" evidence="1">
    <location>
        <begin position="648"/>
        <end position="660"/>
    </location>
</feature>
<feature type="disulfide bond" evidence="1">
    <location>
        <begin position="655"/>
        <end position="673"/>
    </location>
</feature>
<feature type="disulfide bond" evidence="1">
    <location>
        <begin position="667"/>
        <end position="682"/>
    </location>
</feature>
<feature type="disulfide bond" evidence="1">
    <location>
        <begin position="684"/>
        <end position="698"/>
    </location>
</feature>
<feature type="disulfide bond" evidence="1">
    <location>
        <begin position="692"/>
        <end position="711"/>
    </location>
</feature>
<feature type="disulfide bond" evidence="1">
    <location>
        <begin position="705"/>
        <end position="720"/>
    </location>
</feature>
<feature type="disulfide bond" evidence="1">
    <location>
        <begin position="723"/>
        <end position="735"/>
    </location>
</feature>
<feature type="disulfide bond" evidence="1">
    <location>
        <begin position="730"/>
        <end position="748"/>
    </location>
</feature>
<feature type="disulfide bond" evidence="1">
    <location>
        <begin position="742"/>
        <end position="757"/>
    </location>
</feature>
<feature type="disulfide bond" evidence="1">
    <location>
        <begin position="782"/>
        <end position="884"/>
    </location>
</feature>
<feature type="disulfide bond" description="Interchain (between N-terminal propeptide and activated protease fragment chains)" evidence="4 5 6 7">
    <location>
        <begin position="857"/>
        <end position="979"/>
    </location>
</feature>
<feature type="disulfide bond" evidence="1">
    <location>
        <begin position="895"/>
        <end position="911"/>
    </location>
</feature>
<feature type="disulfide bond" evidence="1">
    <location>
        <begin position="993"/>
        <end position="1058"/>
    </location>
</feature>
<feature type="disulfide bond" evidence="1">
    <location>
        <begin position="1022"/>
        <end position="1037"/>
    </location>
</feature>
<feature type="disulfide bond" evidence="1">
    <location>
        <begin position="1048"/>
        <end position="1077"/>
    </location>
</feature>
<feature type="splice variant" id="VSP_043953" description="In isoform 2." evidence="14">
    <original>MGRVSFSVRVSSVRRARCSCPGRCYLSCRVPPTTALRALNGLGCAGVPGETAGGAVGPGPLGTRGFLSGSKFQAPGSWKDCFGAPPAPD</original>
    <variation>MFTKRPPALAPEEYSRRADAPKR</variation>
    <location>
        <begin position="1"/>
        <end position="89"/>
    </location>
</feature>
<feature type="sequence conflict" description="In Ref. 1; BAA34371." evidence="15" ref="1">
    <original>L</original>
    <variation>P</variation>
    <location>
        <position position="402"/>
    </location>
</feature>
<feature type="sequence conflict" description="In Ref. 1; BAA34371." evidence="15" ref="1">
    <original>R</original>
    <variation>T</variation>
    <location>
        <position position="456"/>
    </location>
</feature>
<feature type="sequence conflict" description="In Ref. 1; BAA34371." evidence="15" ref="1">
    <original>L</original>
    <variation>F</variation>
    <location>
        <position position="497"/>
    </location>
</feature>
<feature type="sequence conflict" description="In Ref. 1; BAA34371." evidence="15" ref="1">
    <original>P</original>
    <variation>L</variation>
    <location>
        <position position="535"/>
    </location>
</feature>
<sequence length="1113" mass="123006">MGRVSFSVRVSSVRRARCSCPGRCYLSCRVPPTTALRALNGLGCAGVPGETAGGAVGPGPLGTRGFLSGSKFQAPGSWKDCFGAPPAPDVLRADRSVGEGCPQKLVTANLLRFLLLVLIPCICALIVLLAILLSFVGTLKRVYFKSNDSEPLVTDGEARVPGVIPVNTVYYENTGAPSLPPSQSTPAWTPRAPSPEDQSHRNTSTCMNITHSQCQILPYHSTLAPLLPIVKNMDMEKFLKFFTYLHRLSCYQHILLFGCSLAFPECVVDGDDRHGLLPCRSFCEAAKEGCESVLGMVNSSWPDSLRCSQFRDHTETNSSVRKSCFSLQQEHGKQSLCGGGESFLCTSGLCVPKKLQCNGYNDCDDWSDEAHCNCSKDLFHCGTGKCLHYSLLCDGYDDCGDLSDEQNCDCNLTKEHRCGDGRCIAAEWVCDGDHDCVDKSDEVNCSCHSQGLVECRSGQCIPSTFQCDGDEDCKDGSDEENCSDSQTPCPEGEQGCLGSSCVESCAGSSLCDSDSSLSNCSQCEPITLELCMNLPYNHTHYPNYLGHRTQKEASISWESSLFPALVQTNCYKYLMFFACTILVPKCDVNTGQRIPPCRLLCEHSKERCESVLGIVGLQWPEDTDCNQFPEESSDNQTCLLPNEDVEECSPSHFKCRSGRCVLGSRRCDGQADCDDDSDEENCGCKERALWECPFNKQCLKHTLICDGFPDCPDSMDEKNCSFCQDNELECANHECVPRDLWCDGWVDCSDSSDEWGCVTLSKNGNSSSLLTVHKSAKEHHVCADGWRETLSQLACKQMGLGEPSVTKLIPGQEGQQWLRLYPNWENLNGSTLQELLVYRHSCPSRSEISLLCSKQDCGRRPAARMNKRILGGRTSRPGRWPWQCSLQSEPSGHICGCVLIAKKWVLTVAHCFEGREDADVWKVVFGINNLDHPSGFMQTRFVKTILLHPRYSRAVVDYDISVVELSDDINETSYVRPVCLPSPEEYLEPDTYCYITGWGHMGNKMPFKLQEGEVRIIPLEQCQSYFDMKTITNRMICAGYESGTVDSCMGDSGGPLVCERPGGQWTLFGLTSWGSVCFSKVLGPGVYSNVSYFVGWIERQIYIQTFLQKKSQG</sequence>
<protein>
    <recommendedName>
        <fullName>Atrial natriuretic peptide-converting enzyme</fullName>
        <ecNumber>3.4.21.-</ecNumber>
    </recommendedName>
    <alternativeName>
        <fullName>Corin</fullName>
    </alternativeName>
    <alternativeName>
        <fullName>Low density lipoprotein receptor-related protein 4</fullName>
    </alternativeName>
    <alternativeName>
        <fullName>Pro-ANP-converting enzyme</fullName>
    </alternativeName>
    <component>
        <recommendedName>
            <fullName>Atrial natriuretic peptide-converting enzyme, N-terminal propeptide</fullName>
        </recommendedName>
    </component>
    <component>
        <recommendedName>
            <fullName>Atrial natriuretic peptide-converting enzyme, activated protease fragment</fullName>
        </recommendedName>
    </component>
    <component>
        <recommendedName>
            <fullName>Atrial natriuretic peptide-converting enzyme, 180 kDa soluble fragment</fullName>
        </recommendedName>
    </component>
</protein>
<accession>Q9Z319</accession>
<accession>B2RRC6</accession>
<accession>Q566K6</accession>
<dbReference type="EC" id="3.4.21.-"/>
<dbReference type="EMBL" id="AB013874">
    <property type="protein sequence ID" value="BAA34371.1"/>
    <property type="molecule type" value="mRNA"/>
</dbReference>
<dbReference type="EMBL" id="AC129608">
    <property type="status" value="NOT_ANNOTATED_CDS"/>
    <property type="molecule type" value="Genomic_DNA"/>
</dbReference>
<dbReference type="EMBL" id="AC161529">
    <property type="status" value="NOT_ANNOTATED_CDS"/>
    <property type="molecule type" value="Genomic_DNA"/>
</dbReference>
<dbReference type="EMBL" id="CH466524">
    <property type="protein sequence ID" value="EDL37819.1"/>
    <property type="molecule type" value="Genomic_DNA"/>
</dbReference>
<dbReference type="EMBL" id="BC093485">
    <property type="protein sequence ID" value="AAH93485.1"/>
    <property type="molecule type" value="mRNA"/>
</dbReference>
<dbReference type="EMBL" id="BC138339">
    <property type="protein sequence ID" value="AAI38340.1"/>
    <property type="molecule type" value="mRNA"/>
</dbReference>
<dbReference type="EMBL" id="BC138340">
    <property type="protein sequence ID" value="AAI38341.1"/>
    <property type="molecule type" value="mRNA"/>
</dbReference>
<dbReference type="CCDS" id="CCDS19330.1">
    <molecule id="Q9Z319-1"/>
</dbReference>
<dbReference type="CCDS" id="CCDS51513.1">
    <molecule id="Q9Z319-2"/>
</dbReference>
<dbReference type="PIR" id="JE0315">
    <property type="entry name" value="JE0315"/>
</dbReference>
<dbReference type="RefSeq" id="NP_001116228.1">
    <molecule id="Q9Z319-2"/>
    <property type="nucleotide sequence ID" value="NM_001122756.2"/>
</dbReference>
<dbReference type="RefSeq" id="NP_058565.2">
    <molecule id="Q9Z319-1"/>
    <property type="nucleotide sequence ID" value="NM_016869.4"/>
</dbReference>
<dbReference type="SMR" id="Q9Z319"/>
<dbReference type="BioGRID" id="207313">
    <property type="interactions" value="9"/>
</dbReference>
<dbReference type="FunCoup" id="Q9Z319">
    <property type="interactions" value="279"/>
</dbReference>
<dbReference type="STRING" id="10090.ENSMUSP00000005352"/>
<dbReference type="MEROPS" id="S01.019"/>
<dbReference type="GlyCosmos" id="Q9Z319">
    <property type="glycosylation" value="17 sites, No reported glycans"/>
</dbReference>
<dbReference type="GlyGen" id="Q9Z319">
    <property type="glycosylation" value="19 sites, 3 N-linked glycans (3 sites)"/>
</dbReference>
<dbReference type="iPTMnet" id="Q9Z319"/>
<dbReference type="PhosphoSitePlus" id="Q9Z319"/>
<dbReference type="SwissPalm" id="Q9Z319"/>
<dbReference type="CPTAC" id="non-CPTAC-3454"/>
<dbReference type="PaxDb" id="10090-ENSMUSP00000005352"/>
<dbReference type="ProteomicsDB" id="284092">
    <molecule id="Q9Z319-1"/>
</dbReference>
<dbReference type="ProteomicsDB" id="284093">
    <molecule id="Q9Z319-2"/>
</dbReference>
<dbReference type="Antibodypedia" id="23775">
    <property type="antibodies" value="327 antibodies from 27 providers"/>
</dbReference>
<dbReference type="DNASU" id="53419"/>
<dbReference type="Ensembl" id="ENSMUST00000005352.10">
    <molecule id="Q9Z319-1"/>
    <property type="protein sequence ID" value="ENSMUSP00000005352.4"/>
    <property type="gene ID" value="ENSMUSG00000005220.11"/>
</dbReference>
<dbReference type="Ensembl" id="ENSMUST00000167460.9">
    <molecule id="Q9Z319-2"/>
    <property type="protein sequence ID" value="ENSMUSP00000127389.3"/>
    <property type="gene ID" value="ENSMUSG00000005220.11"/>
</dbReference>
<dbReference type="GeneID" id="53419"/>
<dbReference type="KEGG" id="mmu:53419"/>
<dbReference type="UCSC" id="uc008xrj.2">
    <molecule id="Q9Z319-1"/>
    <property type="organism name" value="mouse"/>
</dbReference>
<dbReference type="UCSC" id="uc008xrk.2">
    <molecule id="Q9Z319-2"/>
    <property type="organism name" value="mouse"/>
</dbReference>
<dbReference type="AGR" id="MGI:1349451"/>
<dbReference type="CTD" id="10699"/>
<dbReference type="MGI" id="MGI:1349451">
    <property type="gene designation" value="Corin"/>
</dbReference>
<dbReference type="VEuPathDB" id="HostDB:ENSMUSG00000005220"/>
<dbReference type="eggNOG" id="KOG3577">
    <property type="taxonomic scope" value="Eukaryota"/>
</dbReference>
<dbReference type="eggNOG" id="KOG3627">
    <property type="taxonomic scope" value="Eukaryota"/>
</dbReference>
<dbReference type="GeneTree" id="ENSGT00940000157103"/>
<dbReference type="InParanoid" id="Q9Z319"/>
<dbReference type="OMA" id="TCLMPDQ"/>
<dbReference type="OrthoDB" id="7863416at2759"/>
<dbReference type="PhylomeDB" id="Q9Z319"/>
<dbReference type="TreeFam" id="TF351678"/>
<dbReference type="Reactome" id="R-MMU-5578768">
    <property type="pathway name" value="Physiological factors"/>
</dbReference>
<dbReference type="BioGRID-ORCS" id="53419">
    <property type="hits" value="1 hit in 83 CRISPR screens"/>
</dbReference>
<dbReference type="ChiTaRS" id="Corin">
    <property type="organism name" value="mouse"/>
</dbReference>
<dbReference type="PRO" id="PR:Q9Z319"/>
<dbReference type="Proteomes" id="UP000000589">
    <property type="component" value="Chromosome 5"/>
</dbReference>
<dbReference type="RNAct" id="Q9Z319">
    <property type="molecule type" value="protein"/>
</dbReference>
<dbReference type="Bgee" id="ENSMUSG00000005220">
    <property type="expression patterns" value="Expressed in myocardium of ventricle and 95 other cell types or tissues"/>
</dbReference>
<dbReference type="ExpressionAtlas" id="Q9Z319">
    <property type="expression patterns" value="baseline and differential"/>
</dbReference>
<dbReference type="GO" id="GO:0015629">
    <property type="term" value="C:actin cytoskeleton"/>
    <property type="evidence" value="ECO:0007669"/>
    <property type="project" value="Ensembl"/>
</dbReference>
<dbReference type="GO" id="GO:0009986">
    <property type="term" value="C:cell surface"/>
    <property type="evidence" value="ECO:0000314"/>
    <property type="project" value="MGI"/>
</dbReference>
<dbReference type="GO" id="GO:0005576">
    <property type="term" value="C:extracellular region"/>
    <property type="evidence" value="ECO:0007669"/>
    <property type="project" value="UniProtKB-SubCell"/>
</dbReference>
<dbReference type="GO" id="GO:0016604">
    <property type="term" value="C:nuclear body"/>
    <property type="evidence" value="ECO:0007669"/>
    <property type="project" value="Ensembl"/>
</dbReference>
<dbReference type="GO" id="GO:0005886">
    <property type="term" value="C:plasma membrane"/>
    <property type="evidence" value="ECO:0007669"/>
    <property type="project" value="UniProtKB-SubCell"/>
</dbReference>
<dbReference type="GO" id="GO:0004252">
    <property type="term" value="F:serine-type endopeptidase activity"/>
    <property type="evidence" value="ECO:0000315"/>
    <property type="project" value="UniProtKB"/>
</dbReference>
<dbReference type="GO" id="GO:0007565">
    <property type="term" value="P:female pregnancy"/>
    <property type="evidence" value="ECO:0000315"/>
    <property type="project" value="UniProtKB"/>
</dbReference>
<dbReference type="GO" id="GO:0030182">
    <property type="term" value="P:neuron differentiation"/>
    <property type="evidence" value="ECO:0000266"/>
    <property type="project" value="MGI"/>
</dbReference>
<dbReference type="GO" id="GO:0016486">
    <property type="term" value="P:peptide hormone processing"/>
    <property type="evidence" value="ECO:0000315"/>
    <property type="project" value="UniProtKB"/>
</dbReference>
<dbReference type="GO" id="GO:0008217">
    <property type="term" value="P:regulation of blood pressure"/>
    <property type="evidence" value="ECO:0000315"/>
    <property type="project" value="UniProtKB"/>
</dbReference>
<dbReference type="GO" id="GO:0035813">
    <property type="term" value="P:regulation of renal sodium excretion"/>
    <property type="evidence" value="ECO:0000315"/>
    <property type="project" value="UniProtKB"/>
</dbReference>
<dbReference type="GO" id="GO:0003050">
    <property type="term" value="P:regulation of systemic arterial blood pressure by atrial natriuretic peptide"/>
    <property type="evidence" value="ECO:0000315"/>
    <property type="project" value="UniProtKB"/>
</dbReference>
<dbReference type="CDD" id="cd07445">
    <property type="entry name" value="CRD_corin_1"/>
    <property type="match status" value="1"/>
</dbReference>
<dbReference type="CDD" id="cd07888">
    <property type="entry name" value="CRD_corin_2"/>
    <property type="match status" value="1"/>
</dbReference>
<dbReference type="CDD" id="cd00112">
    <property type="entry name" value="LDLa"/>
    <property type="match status" value="7"/>
</dbReference>
<dbReference type="CDD" id="cd00190">
    <property type="entry name" value="Tryp_SPc"/>
    <property type="match status" value="1"/>
</dbReference>
<dbReference type="FunFam" id="2.40.10.10:FF:000015">
    <property type="entry name" value="Atrial natriuretic peptide-converting enzyme"/>
    <property type="match status" value="1"/>
</dbReference>
<dbReference type="FunFam" id="4.10.400.10:FF:000083">
    <property type="entry name" value="Atrial natriuretic peptide-converting enzyme"/>
    <property type="match status" value="1"/>
</dbReference>
<dbReference type="FunFam" id="4.10.400.10:FF:000103">
    <property type="entry name" value="Atrial natriuretic peptide-converting enzyme"/>
    <property type="match status" value="1"/>
</dbReference>
<dbReference type="FunFam" id="1.10.2000.10:FF:000013">
    <property type="entry name" value="atrial natriuretic peptide-converting enzyme"/>
    <property type="match status" value="1"/>
</dbReference>
<dbReference type="FunFam" id="1.10.2000.10:FF:000011">
    <property type="entry name" value="Corin, serine peptidase"/>
    <property type="match status" value="1"/>
</dbReference>
<dbReference type="FunFam" id="4.10.400.10:FF:000054">
    <property type="entry name" value="Corin, serine peptidase"/>
    <property type="match status" value="1"/>
</dbReference>
<dbReference type="FunFam" id="4.10.400.10:FF:000024">
    <property type="entry name" value="Low-density lipoprotein RecePtor related"/>
    <property type="match status" value="1"/>
</dbReference>
<dbReference type="FunFam" id="4.10.400.10:FF:000056">
    <property type="entry name" value="Terribly reduced optic lobes, isoform AM"/>
    <property type="match status" value="1"/>
</dbReference>
<dbReference type="Gene3D" id="1.10.2000.10">
    <property type="entry name" value="Frizzled cysteine-rich domain"/>
    <property type="match status" value="2"/>
</dbReference>
<dbReference type="Gene3D" id="4.10.400.10">
    <property type="entry name" value="Low-density Lipoprotein Receptor"/>
    <property type="match status" value="7"/>
</dbReference>
<dbReference type="Gene3D" id="2.40.10.10">
    <property type="entry name" value="Trypsin-like serine proteases"/>
    <property type="match status" value="1"/>
</dbReference>
<dbReference type="InterPro" id="IPR017052">
    <property type="entry name" value="Corin"/>
</dbReference>
<dbReference type="InterPro" id="IPR041762">
    <property type="entry name" value="Corin_CRD_1"/>
</dbReference>
<dbReference type="InterPro" id="IPR041763">
    <property type="entry name" value="Corin_CRD_2"/>
</dbReference>
<dbReference type="InterPro" id="IPR020067">
    <property type="entry name" value="Frizzled_dom"/>
</dbReference>
<dbReference type="InterPro" id="IPR036790">
    <property type="entry name" value="Frizzled_dom_sf"/>
</dbReference>
<dbReference type="InterPro" id="IPR036055">
    <property type="entry name" value="LDL_receptor-like_sf"/>
</dbReference>
<dbReference type="InterPro" id="IPR023415">
    <property type="entry name" value="LDLR_class-A_CS"/>
</dbReference>
<dbReference type="InterPro" id="IPR002172">
    <property type="entry name" value="LDrepeatLR_classA_rpt"/>
</dbReference>
<dbReference type="InterPro" id="IPR009003">
    <property type="entry name" value="Peptidase_S1_PA"/>
</dbReference>
<dbReference type="InterPro" id="IPR043504">
    <property type="entry name" value="Peptidase_S1_PA_chymotrypsin"/>
</dbReference>
<dbReference type="InterPro" id="IPR001190">
    <property type="entry name" value="SRCR"/>
</dbReference>
<dbReference type="InterPro" id="IPR036772">
    <property type="entry name" value="SRCR-like_dom_sf"/>
</dbReference>
<dbReference type="InterPro" id="IPR001254">
    <property type="entry name" value="Trypsin_dom"/>
</dbReference>
<dbReference type="InterPro" id="IPR033116">
    <property type="entry name" value="TRYPSIN_SER"/>
</dbReference>
<dbReference type="PANTHER" id="PTHR24252">
    <property type="entry name" value="ACROSIN-RELATED"/>
    <property type="match status" value="1"/>
</dbReference>
<dbReference type="PANTHER" id="PTHR24252:SF11">
    <property type="entry name" value="ATRIAL NATRIURETIC PEPTIDE-CONVERTING ENZYME ISOFORM X1"/>
    <property type="match status" value="1"/>
</dbReference>
<dbReference type="Pfam" id="PF01392">
    <property type="entry name" value="Fz"/>
    <property type="match status" value="2"/>
</dbReference>
<dbReference type="Pfam" id="PF00057">
    <property type="entry name" value="Ldl_recept_a"/>
    <property type="match status" value="6"/>
</dbReference>
<dbReference type="Pfam" id="PF15494">
    <property type="entry name" value="SRCR_2"/>
    <property type="match status" value="1"/>
</dbReference>
<dbReference type="Pfam" id="PF00089">
    <property type="entry name" value="Trypsin"/>
    <property type="match status" value="1"/>
</dbReference>
<dbReference type="PIRSF" id="PIRSF036376">
    <property type="entry name" value="Corin"/>
    <property type="match status" value="1"/>
</dbReference>
<dbReference type="PRINTS" id="PR00261">
    <property type="entry name" value="LDLRECEPTOR"/>
</dbReference>
<dbReference type="SMART" id="SM00063">
    <property type="entry name" value="FRI"/>
    <property type="match status" value="2"/>
</dbReference>
<dbReference type="SMART" id="SM00192">
    <property type="entry name" value="LDLa"/>
    <property type="match status" value="7"/>
</dbReference>
<dbReference type="SMART" id="SM00202">
    <property type="entry name" value="SR"/>
    <property type="match status" value="1"/>
</dbReference>
<dbReference type="SMART" id="SM00020">
    <property type="entry name" value="Tryp_SPc"/>
    <property type="match status" value="1"/>
</dbReference>
<dbReference type="SUPFAM" id="SSF63501">
    <property type="entry name" value="Frizzled cysteine-rich domain"/>
    <property type="match status" value="2"/>
</dbReference>
<dbReference type="SUPFAM" id="SSF57424">
    <property type="entry name" value="LDL receptor-like module"/>
    <property type="match status" value="7"/>
</dbReference>
<dbReference type="SUPFAM" id="SSF56487">
    <property type="entry name" value="SRCR-like"/>
    <property type="match status" value="1"/>
</dbReference>
<dbReference type="SUPFAM" id="SSF50494">
    <property type="entry name" value="Trypsin-like serine proteases"/>
    <property type="match status" value="1"/>
</dbReference>
<dbReference type="PROSITE" id="PS50038">
    <property type="entry name" value="FZ"/>
    <property type="match status" value="2"/>
</dbReference>
<dbReference type="PROSITE" id="PS01209">
    <property type="entry name" value="LDLRA_1"/>
    <property type="match status" value="6"/>
</dbReference>
<dbReference type="PROSITE" id="PS50068">
    <property type="entry name" value="LDLRA_2"/>
    <property type="match status" value="7"/>
</dbReference>
<dbReference type="PROSITE" id="PS00420">
    <property type="entry name" value="SRCR_1"/>
    <property type="match status" value="1"/>
</dbReference>
<dbReference type="PROSITE" id="PS50287">
    <property type="entry name" value="SRCR_2"/>
    <property type="match status" value="1"/>
</dbReference>
<dbReference type="PROSITE" id="PS50240">
    <property type="entry name" value="TRYPSIN_DOM"/>
    <property type="match status" value="1"/>
</dbReference>
<dbReference type="PROSITE" id="PS00135">
    <property type="entry name" value="TRYPSIN_SER"/>
    <property type="match status" value="1"/>
</dbReference>